<gene>
    <name type="primary">Engase</name>
</gene>
<accession>Q8BX80</accession>
<accession>Q3TK58</accession>
<accession>Q8BJF1</accession>
<proteinExistence type="evidence at protein level"/>
<dbReference type="EC" id="3.2.1.96"/>
<dbReference type="EMBL" id="AK048667">
    <property type="protein sequence ID" value="BAC33415.1"/>
    <property type="molecule type" value="mRNA"/>
</dbReference>
<dbReference type="EMBL" id="AK167142">
    <property type="protein sequence ID" value="BAE39287.1"/>
    <property type="molecule type" value="mRNA"/>
</dbReference>
<dbReference type="EMBL" id="AK084254">
    <property type="protein sequence ID" value="BAC39149.1"/>
    <property type="status" value="ALT_SEQ"/>
    <property type="molecule type" value="mRNA"/>
</dbReference>
<dbReference type="EMBL" id="AL591075">
    <property type="status" value="NOT_ANNOTATED_CDS"/>
    <property type="molecule type" value="Genomic_DNA"/>
</dbReference>
<dbReference type="EMBL" id="BC120924">
    <property type="protein sequence ID" value="AAI20925.1"/>
    <property type="molecule type" value="mRNA"/>
</dbReference>
<dbReference type="CCDS" id="CCDS25704.1">
    <molecule id="Q8BX80-1"/>
</dbReference>
<dbReference type="RefSeq" id="NP_766161.1">
    <molecule id="Q8BX80-1"/>
    <property type="nucleotide sequence ID" value="NM_172573.3"/>
</dbReference>
<dbReference type="SMR" id="Q8BX80"/>
<dbReference type="FunCoup" id="Q8BX80">
    <property type="interactions" value="151"/>
</dbReference>
<dbReference type="STRING" id="10090.ENSMUSP00000117538"/>
<dbReference type="CAZy" id="GH85">
    <property type="family name" value="Glycoside Hydrolase Family 85"/>
</dbReference>
<dbReference type="GlyGen" id="Q8BX80">
    <property type="glycosylation" value="1 site"/>
</dbReference>
<dbReference type="iPTMnet" id="Q8BX80"/>
<dbReference type="PhosphoSitePlus" id="Q8BX80"/>
<dbReference type="SwissPalm" id="Q8BX80"/>
<dbReference type="PaxDb" id="10090-ENSMUSP00000117538"/>
<dbReference type="PeptideAtlas" id="Q8BX80"/>
<dbReference type="ProteomicsDB" id="277872">
    <molecule id="Q8BX80-1"/>
</dbReference>
<dbReference type="Pumba" id="Q8BX80"/>
<dbReference type="Antibodypedia" id="9971">
    <property type="antibodies" value="71 antibodies from 19 providers"/>
</dbReference>
<dbReference type="Ensembl" id="ENSMUST00000043447.10">
    <molecule id="Q8BX80-2"/>
    <property type="protein sequence ID" value="ENSMUSP00000126050.2"/>
    <property type="gene ID" value="ENSMUSG00000033857.13"/>
</dbReference>
<dbReference type="Ensembl" id="ENSMUST00000135383.9">
    <molecule id="Q8BX80-1"/>
    <property type="protein sequence ID" value="ENSMUSP00000117538.3"/>
    <property type="gene ID" value="ENSMUSG00000033857.13"/>
</dbReference>
<dbReference type="Ensembl" id="ENSMUST00000172279.8">
    <molecule id="Q8BX80-2"/>
    <property type="protein sequence ID" value="ENSMUSP00000130097.2"/>
    <property type="gene ID" value="ENSMUSG00000033857.13"/>
</dbReference>
<dbReference type="GeneID" id="217364"/>
<dbReference type="KEGG" id="mmu:217364"/>
<dbReference type="UCSC" id="uc007mpi.1">
    <molecule id="Q8BX80-1"/>
    <property type="organism name" value="mouse"/>
</dbReference>
<dbReference type="AGR" id="MGI:2443788"/>
<dbReference type="CTD" id="64772"/>
<dbReference type="MGI" id="MGI:2443788">
    <property type="gene designation" value="Engase"/>
</dbReference>
<dbReference type="VEuPathDB" id="HostDB:ENSMUSG00000033857"/>
<dbReference type="eggNOG" id="KOG2331">
    <property type="taxonomic scope" value="Eukaryota"/>
</dbReference>
<dbReference type="GeneTree" id="ENSGT00390000018512"/>
<dbReference type="HOGENOM" id="CLU_015297_0_0_1"/>
<dbReference type="InParanoid" id="Q8BX80"/>
<dbReference type="OMA" id="SQVRWQP"/>
<dbReference type="OrthoDB" id="284473at2759"/>
<dbReference type="PhylomeDB" id="Q8BX80"/>
<dbReference type="TreeFam" id="TF314391"/>
<dbReference type="BRENDA" id="3.2.1.96">
    <property type="organism ID" value="3474"/>
</dbReference>
<dbReference type="Reactome" id="R-MMU-532668">
    <property type="pathway name" value="N-glycan trimming in the ER and Calnexin/Calreticulin cycle"/>
</dbReference>
<dbReference type="BioGRID-ORCS" id="217364">
    <property type="hits" value="4 hits in 79 CRISPR screens"/>
</dbReference>
<dbReference type="ChiTaRS" id="Engase">
    <property type="organism name" value="mouse"/>
</dbReference>
<dbReference type="PRO" id="PR:Q8BX80"/>
<dbReference type="Proteomes" id="UP000000589">
    <property type="component" value="Chromosome 11"/>
</dbReference>
<dbReference type="RNAct" id="Q8BX80">
    <property type="molecule type" value="protein"/>
</dbReference>
<dbReference type="Bgee" id="ENSMUSG00000033857">
    <property type="expression patterns" value="Expressed in ectoplacental cone and 131 other cell types or tissues"/>
</dbReference>
<dbReference type="ExpressionAtlas" id="Q8BX80">
    <property type="expression patterns" value="baseline and differential"/>
</dbReference>
<dbReference type="GO" id="GO:0005829">
    <property type="term" value="C:cytosol"/>
    <property type="evidence" value="ECO:0007669"/>
    <property type="project" value="UniProtKB-SubCell"/>
</dbReference>
<dbReference type="GO" id="GO:0033925">
    <property type="term" value="F:mannosyl-glycoprotein endo-beta-N-acetylglucosaminidase activity"/>
    <property type="evidence" value="ECO:0007669"/>
    <property type="project" value="UniProtKB-EC"/>
</dbReference>
<dbReference type="CDD" id="cd06547">
    <property type="entry name" value="GH85_ENGase"/>
    <property type="match status" value="1"/>
</dbReference>
<dbReference type="FunFam" id="2.60.120.260:FF:000087">
    <property type="entry name" value="Cytosolic endo-beta-N-acetylglucosaminidase"/>
    <property type="match status" value="1"/>
</dbReference>
<dbReference type="FunFam" id="3.20.20.80:FF:000043">
    <property type="entry name" value="cytosolic endo-beta-N-acetylglucosaminidase"/>
    <property type="match status" value="1"/>
</dbReference>
<dbReference type="Gene3D" id="2.60.120.260">
    <property type="entry name" value="Galactose-binding domain-like"/>
    <property type="match status" value="1"/>
</dbReference>
<dbReference type="Gene3D" id="3.20.20.80">
    <property type="entry name" value="Glycosidases"/>
    <property type="match status" value="1"/>
</dbReference>
<dbReference type="InterPro" id="IPR001357">
    <property type="entry name" value="BRCT_dom"/>
</dbReference>
<dbReference type="InterPro" id="IPR032979">
    <property type="entry name" value="ENGase"/>
</dbReference>
<dbReference type="InterPro" id="IPR005201">
    <property type="entry name" value="Glyco_hydro_85"/>
</dbReference>
<dbReference type="PANTHER" id="PTHR13246:SF1">
    <property type="entry name" value="CYTOSOLIC ENDO-BETA-N-ACETYLGLUCOSAMINIDASE"/>
    <property type="match status" value="1"/>
</dbReference>
<dbReference type="PANTHER" id="PTHR13246">
    <property type="entry name" value="ENDO BETA N-ACETYLGLUCOSAMINIDASE"/>
    <property type="match status" value="1"/>
</dbReference>
<dbReference type="Pfam" id="PF03644">
    <property type="entry name" value="Glyco_hydro_85"/>
    <property type="match status" value="1"/>
</dbReference>
<dbReference type="PROSITE" id="PS50172">
    <property type="entry name" value="BRCT"/>
    <property type="match status" value="1"/>
</dbReference>
<keyword id="KW-0007">Acetylation</keyword>
<keyword id="KW-0025">Alternative splicing</keyword>
<keyword id="KW-0963">Cytoplasm</keyword>
<keyword id="KW-0326">Glycosidase</keyword>
<keyword id="KW-0378">Hydrolase</keyword>
<keyword id="KW-1185">Reference proteome</keyword>
<protein>
    <recommendedName>
        <fullName>Cytosolic endo-beta-N-acetylglucosaminidase</fullName>
        <shortName>ENGase</shortName>
        <ecNumber>3.2.1.96</ecNumber>
    </recommendedName>
</protein>
<evidence type="ECO:0000250" key="1"/>
<evidence type="ECO:0000250" key="2">
    <source>
        <dbReference type="UniProtKB" id="Q8NFI3"/>
    </source>
</evidence>
<evidence type="ECO:0000255" key="3">
    <source>
        <dbReference type="PROSITE-ProRule" id="PRU00033"/>
    </source>
</evidence>
<evidence type="ECO:0000256" key="4">
    <source>
        <dbReference type="SAM" id="MobiDB-lite"/>
    </source>
</evidence>
<evidence type="ECO:0000303" key="5">
    <source>
    </source>
</evidence>
<evidence type="ECO:0000305" key="6"/>
<reference key="1">
    <citation type="journal article" date="2005" name="Science">
        <title>The transcriptional landscape of the mammalian genome.</title>
        <authorList>
            <person name="Carninci P."/>
            <person name="Kasukawa T."/>
            <person name="Katayama S."/>
            <person name="Gough J."/>
            <person name="Frith M.C."/>
            <person name="Maeda N."/>
            <person name="Oyama R."/>
            <person name="Ravasi T."/>
            <person name="Lenhard B."/>
            <person name="Wells C."/>
            <person name="Kodzius R."/>
            <person name="Shimokawa K."/>
            <person name="Bajic V.B."/>
            <person name="Brenner S.E."/>
            <person name="Batalov S."/>
            <person name="Forrest A.R."/>
            <person name="Zavolan M."/>
            <person name="Davis M.J."/>
            <person name="Wilming L.G."/>
            <person name="Aidinis V."/>
            <person name="Allen J.E."/>
            <person name="Ambesi-Impiombato A."/>
            <person name="Apweiler R."/>
            <person name="Aturaliya R.N."/>
            <person name="Bailey T.L."/>
            <person name="Bansal M."/>
            <person name="Baxter L."/>
            <person name="Beisel K.W."/>
            <person name="Bersano T."/>
            <person name="Bono H."/>
            <person name="Chalk A.M."/>
            <person name="Chiu K.P."/>
            <person name="Choudhary V."/>
            <person name="Christoffels A."/>
            <person name="Clutterbuck D.R."/>
            <person name="Crowe M.L."/>
            <person name="Dalla E."/>
            <person name="Dalrymple B.P."/>
            <person name="de Bono B."/>
            <person name="Della Gatta G."/>
            <person name="di Bernardo D."/>
            <person name="Down T."/>
            <person name="Engstrom P."/>
            <person name="Fagiolini M."/>
            <person name="Faulkner G."/>
            <person name="Fletcher C.F."/>
            <person name="Fukushima T."/>
            <person name="Furuno M."/>
            <person name="Futaki S."/>
            <person name="Gariboldi M."/>
            <person name="Georgii-Hemming P."/>
            <person name="Gingeras T.R."/>
            <person name="Gojobori T."/>
            <person name="Green R.E."/>
            <person name="Gustincich S."/>
            <person name="Harbers M."/>
            <person name="Hayashi Y."/>
            <person name="Hensch T.K."/>
            <person name="Hirokawa N."/>
            <person name="Hill D."/>
            <person name="Huminiecki L."/>
            <person name="Iacono M."/>
            <person name="Ikeo K."/>
            <person name="Iwama A."/>
            <person name="Ishikawa T."/>
            <person name="Jakt M."/>
            <person name="Kanapin A."/>
            <person name="Katoh M."/>
            <person name="Kawasawa Y."/>
            <person name="Kelso J."/>
            <person name="Kitamura H."/>
            <person name="Kitano H."/>
            <person name="Kollias G."/>
            <person name="Krishnan S.P."/>
            <person name="Kruger A."/>
            <person name="Kummerfeld S.K."/>
            <person name="Kurochkin I.V."/>
            <person name="Lareau L.F."/>
            <person name="Lazarevic D."/>
            <person name="Lipovich L."/>
            <person name="Liu J."/>
            <person name="Liuni S."/>
            <person name="McWilliam S."/>
            <person name="Madan Babu M."/>
            <person name="Madera M."/>
            <person name="Marchionni L."/>
            <person name="Matsuda H."/>
            <person name="Matsuzawa S."/>
            <person name="Miki H."/>
            <person name="Mignone F."/>
            <person name="Miyake S."/>
            <person name="Morris K."/>
            <person name="Mottagui-Tabar S."/>
            <person name="Mulder N."/>
            <person name="Nakano N."/>
            <person name="Nakauchi H."/>
            <person name="Ng P."/>
            <person name="Nilsson R."/>
            <person name="Nishiguchi S."/>
            <person name="Nishikawa S."/>
            <person name="Nori F."/>
            <person name="Ohara O."/>
            <person name="Okazaki Y."/>
            <person name="Orlando V."/>
            <person name="Pang K.C."/>
            <person name="Pavan W.J."/>
            <person name="Pavesi G."/>
            <person name="Pesole G."/>
            <person name="Petrovsky N."/>
            <person name="Piazza S."/>
            <person name="Reed J."/>
            <person name="Reid J.F."/>
            <person name="Ring B.Z."/>
            <person name="Ringwald M."/>
            <person name="Rost B."/>
            <person name="Ruan Y."/>
            <person name="Salzberg S.L."/>
            <person name="Sandelin A."/>
            <person name="Schneider C."/>
            <person name="Schoenbach C."/>
            <person name="Sekiguchi K."/>
            <person name="Semple C.A."/>
            <person name="Seno S."/>
            <person name="Sessa L."/>
            <person name="Sheng Y."/>
            <person name="Shibata Y."/>
            <person name="Shimada H."/>
            <person name="Shimada K."/>
            <person name="Silva D."/>
            <person name="Sinclair B."/>
            <person name="Sperling S."/>
            <person name="Stupka E."/>
            <person name="Sugiura K."/>
            <person name="Sultana R."/>
            <person name="Takenaka Y."/>
            <person name="Taki K."/>
            <person name="Tammoja K."/>
            <person name="Tan S.L."/>
            <person name="Tang S."/>
            <person name="Taylor M.S."/>
            <person name="Tegner J."/>
            <person name="Teichmann S.A."/>
            <person name="Ueda H.R."/>
            <person name="van Nimwegen E."/>
            <person name="Verardo R."/>
            <person name="Wei C.L."/>
            <person name="Yagi K."/>
            <person name="Yamanishi H."/>
            <person name="Zabarovsky E."/>
            <person name="Zhu S."/>
            <person name="Zimmer A."/>
            <person name="Hide W."/>
            <person name="Bult C."/>
            <person name="Grimmond S.M."/>
            <person name="Teasdale R.D."/>
            <person name="Liu E.T."/>
            <person name="Brusic V."/>
            <person name="Quackenbush J."/>
            <person name="Wahlestedt C."/>
            <person name="Mattick J.S."/>
            <person name="Hume D.A."/>
            <person name="Kai C."/>
            <person name="Sasaki D."/>
            <person name="Tomaru Y."/>
            <person name="Fukuda S."/>
            <person name="Kanamori-Katayama M."/>
            <person name="Suzuki M."/>
            <person name="Aoki J."/>
            <person name="Arakawa T."/>
            <person name="Iida J."/>
            <person name="Imamura K."/>
            <person name="Itoh M."/>
            <person name="Kato T."/>
            <person name="Kawaji H."/>
            <person name="Kawagashira N."/>
            <person name="Kawashima T."/>
            <person name="Kojima M."/>
            <person name="Kondo S."/>
            <person name="Konno H."/>
            <person name="Nakano K."/>
            <person name="Ninomiya N."/>
            <person name="Nishio T."/>
            <person name="Okada M."/>
            <person name="Plessy C."/>
            <person name="Shibata K."/>
            <person name="Shiraki T."/>
            <person name="Suzuki S."/>
            <person name="Tagami M."/>
            <person name="Waki K."/>
            <person name="Watahiki A."/>
            <person name="Okamura-Oho Y."/>
            <person name="Suzuki H."/>
            <person name="Kawai J."/>
            <person name="Hayashizaki Y."/>
        </authorList>
    </citation>
    <scope>NUCLEOTIDE SEQUENCE [LARGE SCALE MRNA] (ISOFORMS 1 AND 2)</scope>
    <source>
        <strain>C57BL/6J</strain>
        <tissue>Eye</tissue>
        <tissue>Head</tissue>
    </source>
</reference>
<reference key="2">
    <citation type="journal article" date="2009" name="PLoS Biol.">
        <title>Lineage-specific biology revealed by a finished genome assembly of the mouse.</title>
        <authorList>
            <person name="Church D.M."/>
            <person name="Goodstadt L."/>
            <person name="Hillier L.W."/>
            <person name="Zody M.C."/>
            <person name="Goldstein S."/>
            <person name="She X."/>
            <person name="Bult C.J."/>
            <person name="Agarwala R."/>
            <person name="Cherry J.L."/>
            <person name="DiCuccio M."/>
            <person name="Hlavina W."/>
            <person name="Kapustin Y."/>
            <person name="Meric P."/>
            <person name="Maglott D."/>
            <person name="Birtle Z."/>
            <person name="Marques A.C."/>
            <person name="Graves T."/>
            <person name="Zhou S."/>
            <person name="Teague B."/>
            <person name="Potamousis K."/>
            <person name="Churas C."/>
            <person name="Place M."/>
            <person name="Herschleb J."/>
            <person name="Runnheim R."/>
            <person name="Forrest D."/>
            <person name="Amos-Landgraf J."/>
            <person name="Schwartz D.C."/>
            <person name="Cheng Z."/>
            <person name="Lindblad-Toh K."/>
            <person name="Eichler E.E."/>
            <person name="Ponting C.P."/>
        </authorList>
    </citation>
    <scope>NUCLEOTIDE SEQUENCE [LARGE SCALE GENOMIC DNA]</scope>
    <source>
        <strain>C57BL/6J</strain>
    </source>
</reference>
<reference key="3">
    <citation type="journal article" date="2004" name="Genome Res.">
        <title>The status, quality, and expansion of the NIH full-length cDNA project: the Mammalian Gene Collection (MGC).</title>
        <authorList>
            <consortium name="The MGC Project Team"/>
        </authorList>
    </citation>
    <scope>NUCLEOTIDE SEQUENCE [LARGE SCALE MRNA] (ISOFORM 1)</scope>
</reference>
<reference key="4">
    <citation type="journal article" date="2010" name="Cell">
        <title>A tissue-specific atlas of mouse protein phosphorylation and expression.</title>
        <authorList>
            <person name="Huttlin E.L."/>
            <person name="Jedrychowski M.P."/>
            <person name="Elias J.E."/>
            <person name="Goswami T."/>
            <person name="Rad R."/>
            <person name="Beausoleil S.A."/>
            <person name="Villen J."/>
            <person name="Haas W."/>
            <person name="Sowa M.E."/>
            <person name="Gygi S.P."/>
        </authorList>
    </citation>
    <scope>IDENTIFICATION BY MASS SPECTROMETRY [LARGE SCALE ANALYSIS]</scope>
    <source>
        <tissue>Brown adipose tissue</tissue>
        <tissue>Kidney</tissue>
        <tissue>Lung</tissue>
        <tissue>Pancreas</tissue>
        <tissue>Spleen</tissue>
        <tissue>Testis</tissue>
    </source>
</reference>
<comment type="function">
    <text evidence="1">Endoglycosidase that releases N-glycans from glycoproteins by cleaving the beta-1,4-glycosidic bond in the N,N'-diacetylchitobiose core. Involved in the processing of free oligosaccharides in the cytosol (By similarity).</text>
</comment>
<comment type="catalytic activity">
    <reaction>
        <text>an N(4)-(oligosaccharide-(1-&gt;3)-[oligosaccharide-(1-&gt;6)]-beta-D-Man-(1-&gt;4)-beta-D-GlcNAc-(1-&gt;4)-alpha-D-GlcNAc)-L-asparaginyl-[protein] + H2O = an oligosaccharide-(1-&gt;3)-[oligosaccharide-(1-&gt;6)]-beta-D-Man-(1-&gt;4)-D-GlcNAc + N(4)-(N-acetyl-beta-D-glucosaminyl)-L-asparaginyl-[protein]</text>
        <dbReference type="Rhea" id="RHEA:73067"/>
        <dbReference type="Rhea" id="RHEA-COMP:12603"/>
        <dbReference type="Rhea" id="RHEA-COMP:18176"/>
        <dbReference type="ChEBI" id="CHEBI:15377"/>
        <dbReference type="ChEBI" id="CHEBI:132248"/>
        <dbReference type="ChEBI" id="CHEBI:192714"/>
        <dbReference type="ChEBI" id="CHEBI:192715"/>
        <dbReference type="EC" id="3.2.1.96"/>
    </reaction>
</comment>
<comment type="subcellular location">
    <subcellularLocation>
        <location evidence="1">Cytoplasm</location>
        <location evidence="1">Cytosol</location>
    </subcellularLocation>
</comment>
<comment type="alternative products">
    <event type="alternative splicing"/>
    <isoform>
        <id>Q8BX80-1</id>
        <name>1</name>
        <sequence type="displayed"/>
    </isoform>
    <isoform>
        <id>Q8BX80-2</id>
        <name>2</name>
        <sequence type="described" ref="VSP_039763 VSP_039764"/>
    </isoform>
</comment>
<comment type="miscellaneous">
    <molecule>Isoform 2</molecule>
    <text evidence="6">May be produced at very low levels due to a premature stop codon in the mRNA, leading to nonsense-mediated mRNA decay.</text>
</comment>
<comment type="similarity">
    <text evidence="6">Belongs to the glycosyl hydrolase 85 family.</text>
</comment>
<comment type="sequence caution" evidence="6">
    <conflict type="erroneous translation">
        <sequence resource="EMBL-CDS" id="BAC39149"/>
    </conflict>
    <text>Wrong choice of CDS.</text>
</comment>
<feature type="chain" id="PRO_0000328868" description="Cytosolic endo-beta-N-acetylglucosaminidase">
    <location>
        <begin position="1"/>
        <end position="734"/>
    </location>
</feature>
<feature type="domain" description="BRCT" evidence="3">
    <location>
        <begin position="281"/>
        <end position="375"/>
    </location>
</feature>
<feature type="region of interest" description="Disordered" evidence="4">
    <location>
        <begin position="1"/>
        <end position="45"/>
    </location>
</feature>
<feature type="compositionally biased region" description="Basic and acidic residues" evidence="4">
    <location>
        <begin position="22"/>
        <end position="31"/>
    </location>
</feature>
<feature type="modified residue" description="N-acetylmethionine" evidence="2">
    <location>
        <position position="1"/>
    </location>
</feature>
<feature type="splice variant" id="VSP_039763" description="In isoform 2." evidence="5">
    <original>INEDQ</original>
    <variation>CARLG</variation>
    <location>
        <begin position="41"/>
        <end position="45"/>
    </location>
</feature>
<feature type="splice variant" id="VSP_039764" description="In isoform 2." evidence="5">
    <location>
        <begin position="46"/>
        <end position="734"/>
    </location>
</feature>
<organism>
    <name type="scientific">Mus musculus</name>
    <name type="common">Mouse</name>
    <dbReference type="NCBI Taxonomy" id="10090"/>
    <lineage>
        <taxon>Eukaryota</taxon>
        <taxon>Metazoa</taxon>
        <taxon>Chordata</taxon>
        <taxon>Craniata</taxon>
        <taxon>Vertebrata</taxon>
        <taxon>Euteleostomi</taxon>
        <taxon>Mammalia</taxon>
        <taxon>Eutheria</taxon>
        <taxon>Euarchontoglires</taxon>
        <taxon>Glires</taxon>
        <taxon>Rodentia</taxon>
        <taxon>Myomorpha</taxon>
        <taxon>Muroidea</taxon>
        <taxon>Muridae</taxon>
        <taxon>Murinae</taxon>
        <taxon>Mus</taxon>
        <taxon>Mus</taxon>
    </lineage>
</organism>
<sequence length="734" mass="82945">METSSVLTRGAARQRSPAAPEKQARDQTERRPGRRRQGRRINEDQEEEAVFREVVSFTPDPLPARYYDKDTTRPISFYLSTLEELLAWTPLMEDGFNVALEPLVCRRPPLSSPRPRTLLCHDMMGGYLEDRFIQGSEVQNPYSFYHWQYIDIFVYFSHHTVTIPPVCWTNAAHRHGVCVLGTFITEWQEGGRLCEAFLAGDEPSFQAVADRLVQIAQFFRFDGWLINIENSLTPAAVRNTPLFLQYLTAQLHQQVPGGLVLWYDSVVQSGQLKWQDELNDQNRVFFDSCDGFFTNYNWREDHLQRMVAQAGERLADVYVGVDVFARSNVVGGRFDTDKSLELIRKHGFSAALFAPGWVYECLEKSDFFQNQDKFWSLLERFLPTHSICSLPFVTSFCLGLGTRRVCYGKEQAVGPWYHPSAQETQPLFGEHKLAGDSRGWVKTHCCLTDAWHGGSSLLLRGLIPPEVDSVAVRLFSLHIPVPPKVFLSMVYKFEGSTDVQVALELTTGDASSCHVGGMLVLNETGSRHSPRPLRVPPTRLARWASSCGQQLSGGWIQRCYEVNLRGCLLQDLLVSFSRPPGSREEESFICRLGEIQVVDASSLLAPLPRVQNVTISQIRWLPLITGSEGLPTRLLLSCTLHWSYLLLRARCFRIHCWKRTGSSSSVAESPETEKPTFLGLAFANQYRVVDLAVEAAGFGQDGRVEFLVEPVPREGFLVPQAEWGKAVLLFSVPQ</sequence>
<name>ENASE_MOUSE</name>